<keyword id="KW-0007">Acetylation</keyword>
<keyword id="KW-0067">ATP-binding</keyword>
<keyword id="KW-0963">Cytoplasm</keyword>
<keyword id="KW-0210">Decarboxylase</keyword>
<keyword id="KW-0312">Gluconeogenesis</keyword>
<keyword id="KW-0456">Lyase</keyword>
<keyword id="KW-0464">Manganese</keyword>
<keyword id="KW-0479">Metal-binding</keyword>
<keyword id="KW-0547">Nucleotide-binding</keyword>
<dbReference type="EC" id="4.1.1.49" evidence="1"/>
<dbReference type="EMBL" id="CP000247">
    <property type="protein sequence ID" value="ABG71465.1"/>
    <property type="molecule type" value="Genomic_DNA"/>
</dbReference>
<dbReference type="RefSeq" id="WP_001298201.1">
    <property type="nucleotide sequence ID" value="NC_008253.1"/>
</dbReference>
<dbReference type="SMR" id="Q0TC64"/>
<dbReference type="GeneID" id="75173560"/>
<dbReference type="KEGG" id="ecp:ECP_3489"/>
<dbReference type="HOGENOM" id="CLU_018247_0_1_6"/>
<dbReference type="UniPathway" id="UPA00138"/>
<dbReference type="Proteomes" id="UP000009182">
    <property type="component" value="Chromosome"/>
</dbReference>
<dbReference type="GO" id="GO:0005829">
    <property type="term" value="C:cytosol"/>
    <property type="evidence" value="ECO:0007669"/>
    <property type="project" value="TreeGrafter"/>
</dbReference>
<dbReference type="GO" id="GO:0005524">
    <property type="term" value="F:ATP binding"/>
    <property type="evidence" value="ECO:0007669"/>
    <property type="project" value="UniProtKB-UniRule"/>
</dbReference>
<dbReference type="GO" id="GO:0046872">
    <property type="term" value="F:metal ion binding"/>
    <property type="evidence" value="ECO:0007669"/>
    <property type="project" value="UniProtKB-KW"/>
</dbReference>
<dbReference type="GO" id="GO:0004612">
    <property type="term" value="F:phosphoenolpyruvate carboxykinase (ATP) activity"/>
    <property type="evidence" value="ECO:0007669"/>
    <property type="project" value="UniProtKB-UniRule"/>
</dbReference>
<dbReference type="GO" id="GO:0006094">
    <property type="term" value="P:gluconeogenesis"/>
    <property type="evidence" value="ECO:0007669"/>
    <property type="project" value="UniProtKB-UniRule"/>
</dbReference>
<dbReference type="CDD" id="cd00484">
    <property type="entry name" value="PEPCK_ATP"/>
    <property type="match status" value="1"/>
</dbReference>
<dbReference type="FunFam" id="2.170.8.10:FF:000001">
    <property type="entry name" value="Phosphoenolpyruvate carboxykinase (ATP)"/>
    <property type="match status" value="1"/>
</dbReference>
<dbReference type="FunFam" id="3.40.449.10:FF:000001">
    <property type="entry name" value="Phosphoenolpyruvate carboxykinase (ATP)"/>
    <property type="match status" value="1"/>
</dbReference>
<dbReference type="Gene3D" id="3.90.228.20">
    <property type="match status" value="1"/>
</dbReference>
<dbReference type="Gene3D" id="3.40.449.10">
    <property type="entry name" value="Phosphoenolpyruvate Carboxykinase, domain 1"/>
    <property type="match status" value="1"/>
</dbReference>
<dbReference type="Gene3D" id="2.170.8.10">
    <property type="entry name" value="Phosphoenolpyruvate Carboxykinase, domain 2"/>
    <property type="match status" value="1"/>
</dbReference>
<dbReference type="HAMAP" id="MF_00453">
    <property type="entry name" value="PEPCK_ATP"/>
    <property type="match status" value="1"/>
</dbReference>
<dbReference type="InterPro" id="IPR001272">
    <property type="entry name" value="PEP_carboxykinase_ATP"/>
</dbReference>
<dbReference type="InterPro" id="IPR013035">
    <property type="entry name" value="PEP_carboxykinase_C"/>
</dbReference>
<dbReference type="InterPro" id="IPR008210">
    <property type="entry name" value="PEP_carboxykinase_N"/>
</dbReference>
<dbReference type="InterPro" id="IPR015994">
    <property type="entry name" value="PEPCK_ATP_CS"/>
</dbReference>
<dbReference type="NCBIfam" id="TIGR00224">
    <property type="entry name" value="pckA"/>
    <property type="match status" value="1"/>
</dbReference>
<dbReference type="NCBIfam" id="NF006819">
    <property type="entry name" value="PRK09344.1-1"/>
    <property type="match status" value="1"/>
</dbReference>
<dbReference type="NCBIfam" id="NF006820">
    <property type="entry name" value="PRK09344.1-2"/>
    <property type="match status" value="1"/>
</dbReference>
<dbReference type="NCBIfam" id="NF006821">
    <property type="entry name" value="PRK09344.1-3"/>
    <property type="match status" value="1"/>
</dbReference>
<dbReference type="PANTHER" id="PTHR30031:SF0">
    <property type="entry name" value="PHOSPHOENOLPYRUVATE CARBOXYKINASE (ATP)"/>
    <property type="match status" value="1"/>
</dbReference>
<dbReference type="PANTHER" id="PTHR30031">
    <property type="entry name" value="PHOSPHOENOLPYRUVATE CARBOXYKINASE ATP"/>
    <property type="match status" value="1"/>
</dbReference>
<dbReference type="Pfam" id="PF01293">
    <property type="entry name" value="PEPCK_ATP"/>
    <property type="match status" value="1"/>
</dbReference>
<dbReference type="PIRSF" id="PIRSF006294">
    <property type="entry name" value="PEP_crbxkin"/>
    <property type="match status" value="1"/>
</dbReference>
<dbReference type="SUPFAM" id="SSF68923">
    <property type="entry name" value="PEP carboxykinase N-terminal domain"/>
    <property type="match status" value="1"/>
</dbReference>
<dbReference type="SUPFAM" id="SSF53795">
    <property type="entry name" value="PEP carboxykinase-like"/>
    <property type="match status" value="1"/>
</dbReference>
<dbReference type="PROSITE" id="PS00532">
    <property type="entry name" value="PEPCK_ATP"/>
    <property type="match status" value="1"/>
</dbReference>
<protein>
    <recommendedName>
        <fullName evidence="1">Phosphoenolpyruvate carboxykinase (ATP)</fullName>
        <shortName evidence="1">PCK</shortName>
        <shortName evidence="1">PEP carboxykinase</shortName>
        <shortName evidence="1">PEPCK</shortName>
        <ecNumber evidence="1">4.1.1.49</ecNumber>
    </recommendedName>
</protein>
<feature type="chain" id="PRO_1000026324" description="Phosphoenolpyruvate carboxykinase (ATP)">
    <location>
        <begin position="1"/>
        <end position="540"/>
    </location>
</feature>
<feature type="binding site" evidence="1">
    <location>
        <position position="65"/>
    </location>
    <ligand>
        <name>substrate</name>
    </ligand>
</feature>
<feature type="binding site" evidence="1">
    <location>
        <position position="207"/>
    </location>
    <ligand>
        <name>substrate</name>
    </ligand>
</feature>
<feature type="binding site" evidence="1">
    <location>
        <position position="213"/>
    </location>
    <ligand>
        <name>ATP</name>
        <dbReference type="ChEBI" id="CHEBI:30616"/>
    </ligand>
</feature>
<feature type="binding site" evidence="1">
    <location>
        <position position="213"/>
    </location>
    <ligand>
        <name>Mn(2+)</name>
        <dbReference type="ChEBI" id="CHEBI:29035"/>
    </ligand>
</feature>
<feature type="binding site" evidence="1">
    <location>
        <position position="213"/>
    </location>
    <ligand>
        <name>substrate</name>
    </ligand>
</feature>
<feature type="binding site" evidence="1">
    <location>
        <position position="232"/>
    </location>
    <ligand>
        <name>ATP</name>
        <dbReference type="ChEBI" id="CHEBI:30616"/>
    </ligand>
</feature>
<feature type="binding site" evidence="1">
    <location>
        <position position="232"/>
    </location>
    <ligand>
        <name>Mn(2+)</name>
        <dbReference type="ChEBI" id="CHEBI:29035"/>
    </ligand>
</feature>
<feature type="binding site" evidence="1">
    <location>
        <begin position="248"/>
        <end position="256"/>
    </location>
    <ligand>
        <name>ATP</name>
        <dbReference type="ChEBI" id="CHEBI:30616"/>
    </ligand>
</feature>
<feature type="binding site" evidence="1">
    <location>
        <position position="269"/>
    </location>
    <ligand>
        <name>Mn(2+)</name>
        <dbReference type="ChEBI" id="CHEBI:29035"/>
    </ligand>
</feature>
<feature type="binding site" evidence="1">
    <location>
        <position position="297"/>
    </location>
    <ligand>
        <name>ATP</name>
        <dbReference type="ChEBI" id="CHEBI:30616"/>
    </ligand>
</feature>
<feature type="binding site" evidence="1">
    <location>
        <position position="333"/>
    </location>
    <ligand>
        <name>ATP</name>
        <dbReference type="ChEBI" id="CHEBI:30616"/>
    </ligand>
</feature>
<feature type="binding site" evidence="1">
    <location>
        <position position="333"/>
    </location>
    <ligand>
        <name>substrate</name>
    </ligand>
</feature>
<feature type="binding site" evidence="1">
    <location>
        <begin position="449"/>
        <end position="450"/>
    </location>
    <ligand>
        <name>ATP</name>
        <dbReference type="ChEBI" id="CHEBI:30616"/>
    </ligand>
</feature>
<feature type="binding site" evidence="1">
    <location>
        <position position="455"/>
    </location>
    <ligand>
        <name>ATP</name>
        <dbReference type="ChEBI" id="CHEBI:30616"/>
    </ligand>
</feature>
<feature type="modified residue" description="N6-acetyllysine" evidence="1">
    <location>
        <position position="87"/>
    </location>
</feature>
<feature type="modified residue" description="N6-acetyllysine" evidence="1">
    <location>
        <position position="523"/>
    </location>
</feature>
<proteinExistence type="inferred from homology"/>
<evidence type="ECO:0000255" key="1">
    <source>
        <dbReference type="HAMAP-Rule" id="MF_00453"/>
    </source>
</evidence>
<reference key="1">
    <citation type="journal article" date="2006" name="Mol. Microbiol.">
        <title>Role of pathogenicity island-associated integrases in the genome plasticity of uropathogenic Escherichia coli strain 536.</title>
        <authorList>
            <person name="Hochhut B."/>
            <person name="Wilde C."/>
            <person name="Balling G."/>
            <person name="Middendorf B."/>
            <person name="Dobrindt U."/>
            <person name="Brzuszkiewicz E."/>
            <person name="Gottschalk G."/>
            <person name="Carniel E."/>
            <person name="Hacker J."/>
        </authorList>
    </citation>
    <scope>NUCLEOTIDE SEQUENCE [LARGE SCALE GENOMIC DNA]</scope>
    <source>
        <strain>536 / UPEC</strain>
    </source>
</reference>
<sequence>MRVNNGLTPQELEAYGISDVHDIVYNPSYDLLYQEELDPSLTGYERGVLTNLGAVAVDTGIFTGRSPKDKYIVRDDTTRDTFWWADKGKGKNDNKPLSPETWQHLKGLVTKQLSGKRLFVVDAFCGANPDTRLSVRFITEVAWQAHFVKNMFIRPSDEELAGFKPDFIVMNGAKCTNPQWKEQGLNSENFVAFNLTERMQLIGGTWYGGEMKKGMFSMMNYLLPLKGIASMHCSANVGEKGDVAVFFGLSGTGKTTLSTDPKRRLIGDDEHGWDDDGVFNFEGGCYAKTIKLSKEAEPEIYNAIRRDALLENVTVREDGTIDFDDGSKTENTRVSYPIYHIDNIVKPVSKAGHATKVIFLTADAFGVLPPVSRLTADQTQYHFLSGFTAKLAGTERGITEPTPTFSACFGAAFLSLHPTQYAEVLVKRMQAAGAQAYLVNTGWNGTGKRISIKDTRAIIDAILNGSLDNAETFTLPMFNLAIPTELPGVDTKILDPRNTYASPEQWQEKAETLAKLFIDNFDKYTDTPAGAALVAAGPKL</sequence>
<accession>Q0TC64</accession>
<gene>
    <name evidence="1" type="primary">pckA</name>
    <name type="ordered locus">ECP_3489</name>
</gene>
<name>PCKA_ECOL5</name>
<organism>
    <name type="scientific">Escherichia coli O6:K15:H31 (strain 536 / UPEC)</name>
    <dbReference type="NCBI Taxonomy" id="362663"/>
    <lineage>
        <taxon>Bacteria</taxon>
        <taxon>Pseudomonadati</taxon>
        <taxon>Pseudomonadota</taxon>
        <taxon>Gammaproteobacteria</taxon>
        <taxon>Enterobacterales</taxon>
        <taxon>Enterobacteriaceae</taxon>
        <taxon>Escherichia</taxon>
    </lineage>
</organism>
<comment type="function">
    <text evidence="1">Involved in the gluconeogenesis. Catalyzes the conversion of oxaloacetate (OAA) to phosphoenolpyruvate (PEP) through direct phosphoryl transfer between the nucleoside triphosphate and OAA.</text>
</comment>
<comment type="catalytic activity">
    <reaction evidence="1">
        <text>oxaloacetate + ATP = phosphoenolpyruvate + ADP + CO2</text>
        <dbReference type="Rhea" id="RHEA:18617"/>
        <dbReference type="ChEBI" id="CHEBI:16452"/>
        <dbReference type="ChEBI" id="CHEBI:16526"/>
        <dbReference type="ChEBI" id="CHEBI:30616"/>
        <dbReference type="ChEBI" id="CHEBI:58702"/>
        <dbReference type="ChEBI" id="CHEBI:456216"/>
        <dbReference type="EC" id="4.1.1.49"/>
    </reaction>
</comment>
<comment type="cofactor">
    <cofactor evidence="1">
        <name>Mn(2+)</name>
        <dbReference type="ChEBI" id="CHEBI:29035"/>
    </cofactor>
    <text evidence="1">Binds 1 Mn(2+) ion per subunit.</text>
</comment>
<comment type="pathway">
    <text evidence="1">Carbohydrate biosynthesis; gluconeogenesis.</text>
</comment>
<comment type="subunit">
    <text evidence="1">Monomer.</text>
</comment>
<comment type="subcellular location">
    <subcellularLocation>
        <location evidence="1">Cytoplasm</location>
    </subcellularLocation>
</comment>
<comment type="similarity">
    <text evidence="1">Belongs to the phosphoenolpyruvate carboxykinase (ATP) family.</text>
</comment>